<reference key="1">
    <citation type="journal article" date="2004" name="Nat. Genet.">
        <title>Complete sequencing and characterization of 21,243 full-length human cDNAs.</title>
        <authorList>
            <person name="Ota T."/>
            <person name="Suzuki Y."/>
            <person name="Nishikawa T."/>
            <person name="Otsuki T."/>
            <person name="Sugiyama T."/>
            <person name="Irie R."/>
            <person name="Wakamatsu A."/>
            <person name="Hayashi K."/>
            <person name="Sato H."/>
            <person name="Nagai K."/>
            <person name="Kimura K."/>
            <person name="Makita H."/>
            <person name="Sekine M."/>
            <person name="Obayashi M."/>
            <person name="Nishi T."/>
            <person name="Shibahara T."/>
            <person name="Tanaka T."/>
            <person name="Ishii S."/>
            <person name="Yamamoto J."/>
            <person name="Saito K."/>
            <person name="Kawai Y."/>
            <person name="Isono Y."/>
            <person name="Nakamura Y."/>
            <person name="Nagahari K."/>
            <person name="Murakami K."/>
            <person name="Yasuda T."/>
            <person name="Iwayanagi T."/>
            <person name="Wagatsuma M."/>
            <person name="Shiratori A."/>
            <person name="Sudo H."/>
            <person name="Hosoiri T."/>
            <person name="Kaku Y."/>
            <person name="Kodaira H."/>
            <person name="Kondo H."/>
            <person name="Sugawara M."/>
            <person name="Takahashi M."/>
            <person name="Kanda K."/>
            <person name="Yokoi T."/>
            <person name="Furuya T."/>
            <person name="Kikkawa E."/>
            <person name="Omura Y."/>
            <person name="Abe K."/>
            <person name="Kamihara K."/>
            <person name="Katsuta N."/>
            <person name="Sato K."/>
            <person name="Tanikawa M."/>
            <person name="Yamazaki M."/>
            <person name="Ninomiya K."/>
            <person name="Ishibashi T."/>
            <person name="Yamashita H."/>
            <person name="Murakawa K."/>
            <person name="Fujimori K."/>
            <person name="Tanai H."/>
            <person name="Kimata M."/>
            <person name="Watanabe M."/>
            <person name="Hiraoka S."/>
            <person name="Chiba Y."/>
            <person name="Ishida S."/>
            <person name="Ono Y."/>
            <person name="Takiguchi S."/>
            <person name="Watanabe S."/>
            <person name="Yosida M."/>
            <person name="Hotuta T."/>
            <person name="Kusano J."/>
            <person name="Kanehori K."/>
            <person name="Takahashi-Fujii A."/>
            <person name="Hara H."/>
            <person name="Tanase T.-O."/>
            <person name="Nomura Y."/>
            <person name="Togiya S."/>
            <person name="Komai F."/>
            <person name="Hara R."/>
            <person name="Takeuchi K."/>
            <person name="Arita M."/>
            <person name="Imose N."/>
            <person name="Musashino K."/>
            <person name="Yuuki H."/>
            <person name="Oshima A."/>
            <person name="Sasaki N."/>
            <person name="Aotsuka S."/>
            <person name="Yoshikawa Y."/>
            <person name="Matsunawa H."/>
            <person name="Ichihara T."/>
            <person name="Shiohata N."/>
            <person name="Sano S."/>
            <person name="Moriya S."/>
            <person name="Momiyama H."/>
            <person name="Satoh N."/>
            <person name="Takami S."/>
            <person name="Terashima Y."/>
            <person name="Suzuki O."/>
            <person name="Nakagawa S."/>
            <person name="Senoh A."/>
            <person name="Mizoguchi H."/>
            <person name="Goto Y."/>
            <person name="Shimizu F."/>
            <person name="Wakebe H."/>
            <person name="Hishigaki H."/>
            <person name="Watanabe T."/>
            <person name="Sugiyama A."/>
            <person name="Takemoto M."/>
            <person name="Kawakami B."/>
            <person name="Yamazaki M."/>
            <person name="Watanabe K."/>
            <person name="Kumagai A."/>
            <person name="Itakura S."/>
            <person name="Fukuzumi Y."/>
            <person name="Fujimori Y."/>
            <person name="Komiyama M."/>
            <person name="Tashiro H."/>
            <person name="Tanigami A."/>
            <person name="Fujiwara T."/>
            <person name="Ono T."/>
            <person name="Yamada K."/>
            <person name="Fujii Y."/>
            <person name="Ozaki K."/>
            <person name="Hirao M."/>
            <person name="Ohmori Y."/>
            <person name="Kawabata A."/>
            <person name="Hikiji T."/>
            <person name="Kobatake N."/>
            <person name="Inagaki H."/>
            <person name="Ikema Y."/>
            <person name="Okamoto S."/>
            <person name="Okitani R."/>
            <person name="Kawakami T."/>
            <person name="Noguchi S."/>
            <person name="Itoh T."/>
            <person name="Shigeta K."/>
            <person name="Senba T."/>
            <person name="Matsumura K."/>
            <person name="Nakajima Y."/>
            <person name="Mizuno T."/>
            <person name="Morinaga M."/>
            <person name="Sasaki M."/>
            <person name="Togashi T."/>
            <person name="Oyama M."/>
            <person name="Hata H."/>
            <person name="Watanabe M."/>
            <person name="Komatsu T."/>
            <person name="Mizushima-Sugano J."/>
            <person name="Satoh T."/>
            <person name="Shirai Y."/>
            <person name="Takahashi Y."/>
            <person name="Nakagawa K."/>
            <person name="Okumura K."/>
            <person name="Nagase T."/>
            <person name="Nomura N."/>
            <person name="Kikuchi H."/>
            <person name="Masuho Y."/>
            <person name="Yamashita R."/>
            <person name="Nakai K."/>
            <person name="Yada T."/>
            <person name="Nakamura Y."/>
            <person name="Ohara O."/>
            <person name="Isogai T."/>
            <person name="Sugano S."/>
        </authorList>
    </citation>
    <scope>NUCLEOTIDE SEQUENCE [LARGE SCALE MRNA] (ISOFORM 2)</scope>
    <source>
        <tissue>Brain</tissue>
    </source>
</reference>
<reference key="2">
    <citation type="journal article" date="2004" name="Nature">
        <title>The DNA sequence and comparative analysis of human chromosome 10.</title>
        <authorList>
            <person name="Deloukas P."/>
            <person name="Earthrowl M.E."/>
            <person name="Grafham D.V."/>
            <person name="Rubenfield M."/>
            <person name="French L."/>
            <person name="Steward C.A."/>
            <person name="Sims S.K."/>
            <person name="Jones M.C."/>
            <person name="Searle S."/>
            <person name="Scott C."/>
            <person name="Howe K."/>
            <person name="Hunt S.E."/>
            <person name="Andrews T.D."/>
            <person name="Gilbert J.G.R."/>
            <person name="Swarbreck D."/>
            <person name="Ashurst J.L."/>
            <person name="Taylor A."/>
            <person name="Battles J."/>
            <person name="Bird C.P."/>
            <person name="Ainscough R."/>
            <person name="Almeida J.P."/>
            <person name="Ashwell R.I.S."/>
            <person name="Ambrose K.D."/>
            <person name="Babbage A.K."/>
            <person name="Bagguley C.L."/>
            <person name="Bailey J."/>
            <person name="Banerjee R."/>
            <person name="Bates K."/>
            <person name="Beasley H."/>
            <person name="Bray-Allen S."/>
            <person name="Brown A.J."/>
            <person name="Brown J.Y."/>
            <person name="Burford D.C."/>
            <person name="Burrill W."/>
            <person name="Burton J."/>
            <person name="Cahill P."/>
            <person name="Camire D."/>
            <person name="Carter N.P."/>
            <person name="Chapman J.C."/>
            <person name="Clark S.Y."/>
            <person name="Clarke G."/>
            <person name="Clee C.M."/>
            <person name="Clegg S."/>
            <person name="Corby N."/>
            <person name="Coulson A."/>
            <person name="Dhami P."/>
            <person name="Dutta I."/>
            <person name="Dunn M."/>
            <person name="Faulkner L."/>
            <person name="Frankish A."/>
            <person name="Frankland J.A."/>
            <person name="Garner P."/>
            <person name="Garnett J."/>
            <person name="Gribble S."/>
            <person name="Griffiths C."/>
            <person name="Grocock R."/>
            <person name="Gustafson E."/>
            <person name="Hammond S."/>
            <person name="Harley J.L."/>
            <person name="Hart E."/>
            <person name="Heath P.D."/>
            <person name="Ho T.P."/>
            <person name="Hopkins B."/>
            <person name="Horne J."/>
            <person name="Howden P.J."/>
            <person name="Huckle E."/>
            <person name="Hynds C."/>
            <person name="Johnson C."/>
            <person name="Johnson D."/>
            <person name="Kana A."/>
            <person name="Kay M."/>
            <person name="Kimberley A.M."/>
            <person name="Kershaw J.K."/>
            <person name="Kokkinaki M."/>
            <person name="Laird G.K."/>
            <person name="Lawlor S."/>
            <person name="Lee H.M."/>
            <person name="Leongamornlert D.A."/>
            <person name="Laird G."/>
            <person name="Lloyd C."/>
            <person name="Lloyd D.M."/>
            <person name="Loveland J."/>
            <person name="Lovell J."/>
            <person name="McLaren S."/>
            <person name="McLay K.E."/>
            <person name="McMurray A."/>
            <person name="Mashreghi-Mohammadi M."/>
            <person name="Matthews L."/>
            <person name="Milne S."/>
            <person name="Nickerson T."/>
            <person name="Nguyen M."/>
            <person name="Overton-Larty E."/>
            <person name="Palmer S.A."/>
            <person name="Pearce A.V."/>
            <person name="Peck A.I."/>
            <person name="Pelan S."/>
            <person name="Phillimore B."/>
            <person name="Porter K."/>
            <person name="Rice C.M."/>
            <person name="Rogosin A."/>
            <person name="Ross M.T."/>
            <person name="Sarafidou T."/>
            <person name="Sehra H.K."/>
            <person name="Shownkeen R."/>
            <person name="Skuce C.D."/>
            <person name="Smith M."/>
            <person name="Standring L."/>
            <person name="Sycamore N."/>
            <person name="Tester J."/>
            <person name="Thorpe A."/>
            <person name="Torcasso W."/>
            <person name="Tracey A."/>
            <person name="Tromans A."/>
            <person name="Tsolas J."/>
            <person name="Wall M."/>
            <person name="Walsh J."/>
            <person name="Wang H."/>
            <person name="Weinstock K."/>
            <person name="West A.P."/>
            <person name="Willey D.L."/>
            <person name="Whitehead S.L."/>
            <person name="Wilming L."/>
            <person name="Wray P.W."/>
            <person name="Young L."/>
            <person name="Chen Y."/>
            <person name="Lovering R.C."/>
            <person name="Moschonas N.K."/>
            <person name="Siebert R."/>
            <person name="Fechtel K."/>
            <person name="Bentley D."/>
            <person name="Durbin R.M."/>
            <person name="Hubbard T."/>
            <person name="Doucette-Stamm L."/>
            <person name="Beck S."/>
            <person name="Smith D.R."/>
            <person name="Rogers J."/>
        </authorList>
    </citation>
    <scope>NUCLEOTIDE SEQUENCE [LARGE SCALE GENOMIC DNA] (ISOFORM 1)</scope>
</reference>
<reference key="3">
    <citation type="submission" date="2005-09" db="EMBL/GenBank/DDBJ databases">
        <authorList>
            <person name="Mural R.J."/>
            <person name="Istrail S."/>
            <person name="Sutton G.G."/>
            <person name="Florea L."/>
            <person name="Halpern A.L."/>
            <person name="Mobarry C.M."/>
            <person name="Lippert R."/>
            <person name="Walenz B."/>
            <person name="Shatkay H."/>
            <person name="Dew I."/>
            <person name="Miller J.R."/>
            <person name="Flanigan M.J."/>
            <person name="Edwards N.J."/>
            <person name="Bolanos R."/>
            <person name="Fasulo D."/>
            <person name="Halldorsson B.V."/>
            <person name="Hannenhalli S."/>
            <person name="Turner R."/>
            <person name="Yooseph S."/>
            <person name="Lu F."/>
            <person name="Nusskern D.R."/>
            <person name="Shue B.C."/>
            <person name="Zheng X.H."/>
            <person name="Zhong F."/>
            <person name="Delcher A.L."/>
            <person name="Huson D.H."/>
            <person name="Kravitz S.A."/>
            <person name="Mouchard L."/>
            <person name="Reinert K."/>
            <person name="Remington K.A."/>
            <person name="Clark A.G."/>
            <person name="Waterman M.S."/>
            <person name="Eichler E.E."/>
            <person name="Adams M.D."/>
            <person name="Hunkapiller M.W."/>
            <person name="Myers E.W."/>
            <person name="Venter J.C."/>
        </authorList>
    </citation>
    <scope>NUCLEOTIDE SEQUENCE [LARGE SCALE GENOMIC DNA]</scope>
</reference>
<reference key="4">
    <citation type="journal article" date="2004" name="Genome Res.">
        <title>The status, quality, and expansion of the NIH full-length cDNA project: the Mammalian Gene Collection (MGC).</title>
        <authorList>
            <consortium name="The MGC Project Team"/>
        </authorList>
    </citation>
    <scope>NUCLEOTIDE SEQUENCE [LARGE SCALE MRNA] (ISOFORM 2)</scope>
    <source>
        <tissue>Brain</tissue>
    </source>
</reference>
<reference key="5">
    <citation type="journal article" date="2012" name="Hum. Mutat.">
        <title>VAX1 mutation associated with microphthalmia, corpus callosum agenesis, and orofacial clefting: The first description of a VAX1 phenotype in humans.</title>
        <authorList>
            <person name="Slavotinek A.M."/>
            <person name="Chao R."/>
            <person name="Vacik T."/>
            <person name="Yahyavi M."/>
            <person name="Abouzeid H."/>
            <person name="Bardakjian T."/>
            <person name="Schneider A."/>
            <person name="Shaw G."/>
            <person name="Sherr E.H."/>
            <person name="Lemke G."/>
            <person name="Youssef M."/>
            <person name="Schorderet D.F."/>
        </authorList>
    </citation>
    <scope>VARIANT MCOPS11 SER-152</scope>
    <scope>CHARACTERIZATION OF VARIANT MCOPS11 SER-152</scope>
</reference>
<dbReference type="EMBL" id="AK127095">
    <property type="protein sequence ID" value="BAC86826.1"/>
    <property type="molecule type" value="mRNA"/>
</dbReference>
<dbReference type="EMBL" id="CH471066">
    <property type="protein sequence ID" value="EAW49433.1"/>
    <property type="molecule type" value="Genomic_DNA"/>
</dbReference>
<dbReference type="EMBL" id="BC101694">
    <property type="protein sequence ID" value="AAI01695.1"/>
    <property type="molecule type" value="mRNA"/>
</dbReference>
<dbReference type="EMBL" id="BC101696">
    <property type="protein sequence ID" value="AAI01697.1"/>
    <property type="molecule type" value="mRNA"/>
</dbReference>
<dbReference type="EMBL" id="AL731557">
    <property type="status" value="NOT_ANNOTATED_CDS"/>
    <property type="molecule type" value="Genomic_DNA"/>
</dbReference>
<dbReference type="CCDS" id="CCDS44483.1">
    <molecule id="Q5SQQ9-1"/>
</dbReference>
<dbReference type="CCDS" id="CCDS7597.1">
    <molecule id="Q5SQQ9-2"/>
</dbReference>
<dbReference type="RefSeq" id="NP_001106175.1">
    <molecule id="Q5SQQ9-1"/>
    <property type="nucleotide sequence ID" value="NM_001112704.2"/>
</dbReference>
<dbReference type="RefSeq" id="NP_954582.1">
    <molecule id="Q5SQQ9-2"/>
    <property type="nucleotide sequence ID" value="NM_199131.3"/>
</dbReference>
<dbReference type="SMR" id="Q5SQQ9"/>
<dbReference type="BioGRID" id="116213">
    <property type="interactions" value="16"/>
</dbReference>
<dbReference type="FunCoup" id="Q5SQQ9">
    <property type="interactions" value="333"/>
</dbReference>
<dbReference type="IntAct" id="Q5SQQ9">
    <property type="interactions" value="16"/>
</dbReference>
<dbReference type="STRING" id="9606.ENSP00000358207"/>
<dbReference type="iPTMnet" id="Q5SQQ9"/>
<dbReference type="PhosphoSitePlus" id="Q5SQQ9"/>
<dbReference type="BioMuta" id="VAX1"/>
<dbReference type="DMDM" id="74743553"/>
<dbReference type="jPOST" id="Q5SQQ9"/>
<dbReference type="MassIVE" id="Q5SQQ9"/>
<dbReference type="PaxDb" id="9606-ENSP00000358207"/>
<dbReference type="PeptideAtlas" id="Q5SQQ9"/>
<dbReference type="ProteomicsDB" id="63818">
    <molecule id="Q5SQQ9-2"/>
</dbReference>
<dbReference type="Antibodypedia" id="32036">
    <property type="antibodies" value="189 antibodies from 27 providers"/>
</dbReference>
<dbReference type="DNASU" id="11023"/>
<dbReference type="Ensembl" id="ENST00000277905.6">
    <molecule id="Q5SQQ9-2"/>
    <property type="protein sequence ID" value="ENSP00000277905.2"/>
    <property type="gene ID" value="ENSG00000148704.13"/>
</dbReference>
<dbReference type="Ensembl" id="ENST00000369206.6">
    <molecule id="Q5SQQ9-1"/>
    <property type="protein sequence ID" value="ENSP00000358207.4"/>
    <property type="gene ID" value="ENSG00000148704.13"/>
</dbReference>
<dbReference type="GeneID" id="11023"/>
<dbReference type="KEGG" id="hsa:11023"/>
<dbReference type="MANE-Select" id="ENST00000369206.6">
    <property type="protein sequence ID" value="ENSP00000358207.4"/>
    <property type="RefSeq nucleotide sequence ID" value="NM_001112704.2"/>
    <property type="RefSeq protein sequence ID" value="NP_001106175.1"/>
</dbReference>
<dbReference type="UCSC" id="uc001ldb.1">
    <molecule id="Q5SQQ9-1"/>
    <property type="organism name" value="human"/>
</dbReference>
<dbReference type="AGR" id="HGNC:12660"/>
<dbReference type="CTD" id="11023"/>
<dbReference type="DisGeNET" id="11023"/>
<dbReference type="GeneCards" id="VAX1"/>
<dbReference type="HGNC" id="HGNC:12660">
    <property type="gene designation" value="VAX1"/>
</dbReference>
<dbReference type="HPA" id="ENSG00000148704">
    <property type="expression patterns" value="Tissue enriched (brain)"/>
</dbReference>
<dbReference type="MalaCards" id="VAX1"/>
<dbReference type="MIM" id="604294">
    <property type="type" value="gene"/>
</dbReference>
<dbReference type="MIM" id="614402">
    <property type="type" value="phenotype"/>
</dbReference>
<dbReference type="neXtProt" id="NX_Q5SQQ9"/>
<dbReference type="OpenTargets" id="ENSG00000148704"/>
<dbReference type="PharmGKB" id="PA37283"/>
<dbReference type="VEuPathDB" id="HostDB:ENSG00000148704"/>
<dbReference type="eggNOG" id="KOG0843">
    <property type="taxonomic scope" value="Eukaryota"/>
</dbReference>
<dbReference type="GeneTree" id="ENSGT00940000161152"/>
<dbReference type="HOGENOM" id="CLU_125032_0_0_1"/>
<dbReference type="InParanoid" id="Q5SQQ9"/>
<dbReference type="OMA" id="DCNKSKA"/>
<dbReference type="OrthoDB" id="6159439at2759"/>
<dbReference type="PAN-GO" id="Q5SQQ9">
    <property type="GO annotations" value="6 GO annotations based on evolutionary models"/>
</dbReference>
<dbReference type="PhylomeDB" id="Q5SQQ9"/>
<dbReference type="TreeFam" id="TF319504"/>
<dbReference type="PathwayCommons" id="Q5SQQ9"/>
<dbReference type="SignaLink" id="Q5SQQ9"/>
<dbReference type="BioGRID-ORCS" id="11023">
    <property type="hits" value="8 hits in 1167 CRISPR screens"/>
</dbReference>
<dbReference type="GeneWiki" id="VAX1"/>
<dbReference type="GenomeRNAi" id="11023"/>
<dbReference type="Pharos" id="Q5SQQ9">
    <property type="development level" value="Tbio"/>
</dbReference>
<dbReference type="PRO" id="PR:Q5SQQ9"/>
<dbReference type="Proteomes" id="UP000005640">
    <property type="component" value="Chromosome 10"/>
</dbReference>
<dbReference type="RNAct" id="Q5SQQ9">
    <property type="molecule type" value="protein"/>
</dbReference>
<dbReference type="Bgee" id="ENSG00000148704">
    <property type="expression patterns" value="Expressed in male germ line stem cell (sensu Vertebrata) in testis and 29 other cell types or tissues"/>
</dbReference>
<dbReference type="GO" id="GO:0000785">
    <property type="term" value="C:chromatin"/>
    <property type="evidence" value="ECO:0000247"/>
    <property type="project" value="NTNU_SB"/>
</dbReference>
<dbReference type="GO" id="GO:0005634">
    <property type="term" value="C:nucleus"/>
    <property type="evidence" value="ECO:0000318"/>
    <property type="project" value="GO_Central"/>
</dbReference>
<dbReference type="GO" id="GO:0031490">
    <property type="term" value="F:chromatin DNA binding"/>
    <property type="evidence" value="ECO:0007669"/>
    <property type="project" value="Ensembl"/>
</dbReference>
<dbReference type="GO" id="GO:0000981">
    <property type="term" value="F:DNA-binding transcription factor activity, RNA polymerase II-specific"/>
    <property type="evidence" value="ECO:0000247"/>
    <property type="project" value="NTNU_SB"/>
</dbReference>
<dbReference type="GO" id="GO:0001227">
    <property type="term" value="F:DNA-binding transcription repressor activity, RNA polymerase II-specific"/>
    <property type="evidence" value="ECO:0007669"/>
    <property type="project" value="Ensembl"/>
</dbReference>
<dbReference type="GO" id="GO:0000978">
    <property type="term" value="F:RNA polymerase II cis-regulatory region sequence-specific DNA binding"/>
    <property type="evidence" value="ECO:0000318"/>
    <property type="project" value="GO_Central"/>
</dbReference>
<dbReference type="GO" id="GO:0001162">
    <property type="term" value="F:RNA polymerase II intronic transcription regulatory region sequence-specific DNA binding"/>
    <property type="evidence" value="ECO:0007669"/>
    <property type="project" value="Ensembl"/>
</dbReference>
<dbReference type="GO" id="GO:1990837">
    <property type="term" value="F:sequence-specific double-stranded DNA binding"/>
    <property type="evidence" value="ECO:0000314"/>
    <property type="project" value="ARUK-UCL"/>
</dbReference>
<dbReference type="GO" id="GO:0048708">
    <property type="term" value="P:astrocyte differentiation"/>
    <property type="evidence" value="ECO:0007669"/>
    <property type="project" value="Ensembl"/>
</dbReference>
<dbReference type="GO" id="GO:0007411">
    <property type="term" value="P:axon guidance"/>
    <property type="evidence" value="ECO:0007669"/>
    <property type="project" value="Ensembl"/>
</dbReference>
<dbReference type="GO" id="GO:0007420">
    <property type="term" value="P:brain development"/>
    <property type="evidence" value="ECO:0000318"/>
    <property type="project" value="GO_Central"/>
</dbReference>
<dbReference type="GO" id="GO:0043010">
    <property type="term" value="P:camera-type eye development"/>
    <property type="evidence" value="ECO:0007669"/>
    <property type="project" value="Ensembl"/>
</dbReference>
<dbReference type="GO" id="GO:0007417">
    <property type="term" value="P:central nervous system development"/>
    <property type="evidence" value="ECO:0000318"/>
    <property type="project" value="GO_Central"/>
</dbReference>
<dbReference type="GO" id="GO:0007406">
    <property type="term" value="P:negative regulation of neuroblast proliferation"/>
    <property type="evidence" value="ECO:0007669"/>
    <property type="project" value="Ensembl"/>
</dbReference>
<dbReference type="GO" id="GO:0007405">
    <property type="term" value="P:neuroblast proliferation"/>
    <property type="evidence" value="ECO:0007669"/>
    <property type="project" value="Ensembl"/>
</dbReference>
<dbReference type="GO" id="GO:0060563">
    <property type="term" value="P:neuroepithelial cell differentiation"/>
    <property type="evidence" value="ECO:0007669"/>
    <property type="project" value="Ensembl"/>
</dbReference>
<dbReference type="GO" id="GO:0030182">
    <property type="term" value="P:neuron differentiation"/>
    <property type="evidence" value="ECO:0000318"/>
    <property type="project" value="GO_Central"/>
</dbReference>
<dbReference type="GO" id="GO:0001764">
    <property type="term" value="P:neuron migration"/>
    <property type="evidence" value="ECO:0007669"/>
    <property type="project" value="Ensembl"/>
</dbReference>
<dbReference type="GO" id="GO:0006357">
    <property type="term" value="P:regulation of transcription by RNA polymerase II"/>
    <property type="evidence" value="ECO:0000318"/>
    <property type="project" value="GO_Central"/>
</dbReference>
<dbReference type="GO" id="GO:0060021">
    <property type="term" value="P:roof of mouth development"/>
    <property type="evidence" value="ECO:0007669"/>
    <property type="project" value="Ensembl"/>
</dbReference>
<dbReference type="GO" id="GO:0035914">
    <property type="term" value="P:skeletal muscle cell differentiation"/>
    <property type="evidence" value="ECO:0007669"/>
    <property type="project" value="Ensembl"/>
</dbReference>
<dbReference type="CDD" id="cd00086">
    <property type="entry name" value="homeodomain"/>
    <property type="match status" value="1"/>
</dbReference>
<dbReference type="FunFam" id="1.10.10.60:FF:000375">
    <property type="entry name" value="Ventral anterior homeobox 1"/>
    <property type="match status" value="1"/>
</dbReference>
<dbReference type="Gene3D" id="1.10.10.60">
    <property type="entry name" value="Homeodomain-like"/>
    <property type="match status" value="1"/>
</dbReference>
<dbReference type="InterPro" id="IPR050877">
    <property type="entry name" value="EMX-VAX-Noto_Homeobox_TFs"/>
</dbReference>
<dbReference type="InterPro" id="IPR001356">
    <property type="entry name" value="HD"/>
</dbReference>
<dbReference type="InterPro" id="IPR017970">
    <property type="entry name" value="Homeobox_CS"/>
</dbReference>
<dbReference type="InterPro" id="IPR009057">
    <property type="entry name" value="Homeodomain-like_sf"/>
</dbReference>
<dbReference type="InterPro" id="IPR000047">
    <property type="entry name" value="HTH_motif"/>
</dbReference>
<dbReference type="PANTHER" id="PTHR24339">
    <property type="entry name" value="HOMEOBOX PROTEIN EMX-RELATED"/>
    <property type="match status" value="1"/>
</dbReference>
<dbReference type="PANTHER" id="PTHR24339:SF32">
    <property type="entry name" value="VENTRAL ANTERIOR HOMEOBOX 1"/>
    <property type="match status" value="1"/>
</dbReference>
<dbReference type="Pfam" id="PF00046">
    <property type="entry name" value="Homeodomain"/>
    <property type="match status" value="1"/>
</dbReference>
<dbReference type="PRINTS" id="PR00031">
    <property type="entry name" value="HTHREPRESSR"/>
</dbReference>
<dbReference type="SMART" id="SM00389">
    <property type="entry name" value="HOX"/>
    <property type="match status" value="1"/>
</dbReference>
<dbReference type="SUPFAM" id="SSF46689">
    <property type="entry name" value="Homeodomain-like"/>
    <property type="match status" value="1"/>
</dbReference>
<dbReference type="PROSITE" id="PS00027">
    <property type="entry name" value="HOMEOBOX_1"/>
    <property type="match status" value="1"/>
</dbReference>
<dbReference type="PROSITE" id="PS50071">
    <property type="entry name" value="HOMEOBOX_2"/>
    <property type="match status" value="1"/>
</dbReference>
<keyword id="KW-0025">Alternative splicing</keyword>
<keyword id="KW-0217">Developmental protein</keyword>
<keyword id="KW-0225">Disease variant</keyword>
<keyword id="KW-0238">DNA-binding</keyword>
<keyword id="KW-0371">Homeobox</keyword>
<keyword id="KW-1013">Microphthalmia</keyword>
<keyword id="KW-0539">Nucleus</keyword>
<keyword id="KW-1267">Proteomics identification</keyword>
<keyword id="KW-1185">Reference proteome</keyword>
<keyword id="KW-0804">Transcription</keyword>
<keyword id="KW-0805">Transcription regulation</keyword>
<proteinExistence type="evidence at protein level"/>
<feature type="chain" id="PRO_0000240522" description="Ventral anterior homeobox 1">
    <location>
        <begin position="1"/>
        <end position="334"/>
    </location>
</feature>
<feature type="DNA-binding region" description="Homeobox" evidence="2">
    <location>
        <begin position="100"/>
        <end position="159"/>
    </location>
</feature>
<feature type="region of interest" description="Disordered" evidence="3">
    <location>
        <begin position="1"/>
        <end position="41"/>
    </location>
</feature>
<feature type="region of interest" description="Disordered" evidence="3">
    <location>
        <begin position="234"/>
        <end position="263"/>
    </location>
</feature>
<feature type="region of interest" description="Disordered" evidence="3">
    <location>
        <begin position="314"/>
        <end position="334"/>
    </location>
</feature>
<feature type="compositionally biased region" description="Basic and acidic residues" evidence="3">
    <location>
        <begin position="1"/>
        <end position="34"/>
    </location>
</feature>
<feature type="compositionally biased region" description="Basic and acidic residues" evidence="3">
    <location>
        <begin position="323"/>
        <end position="334"/>
    </location>
</feature>
<feature type="splice variant" id="VSP_019396" description="In isoform 2." evidence="5 6">
    <original>VKVWFQNRRTKQKKDQGKDSELRSVVSETAATCSVLRLLEQGRLLSPPGLPALLPPCATGALGSALRGPSLPALGAGAAAGSAAAAAAAAPGPAGAASPHPPAVGGAPGPGPAGPGGLHAGAPAAGHSLFSLPVPSLLGSVASRLSSAPLTMAGSLAGNLQELSARYLSSSAFEPYSRTNNKEGAEKKALD</original>
    <variation>ANSEENNERFKRGIKKQKKKRKKEPANDESRRGDSGGRGWQPL</variation>
    <location>
        <begin position="144"/>
        <end position="334"/>
    </location>
</feature>
<feature type="sequence variant" id="VAR_067307" description="In MCOPS11; loss of function mutation; dbSNP:rs387907252." evidence="4">
    <original>R</original>
    <variation>S</variation>
    <location>
        <position position="152"/>
    </location>
</feature>
<organism>
    <name type="scientific">Homo sapiens</name>
    <name type="common">Human</name>
    <dbReference type="NCBI Taxonomy" id="9606"/>
    <lineage>
        <taxon>Eukaryota</taxon>
        <taxon>Metazoa</taxon>
        <taxon>Chordata</taxon>
        <taxon>Craniata</taxon>
        <taxon>Vertebrata</taxon>
        <taxon>Euteleostomi</taxon>
        <taxon>Mammalia</taxon>
        <taxon>Eutheria</taxon>
        <taxon>Euarchontoglires</taxon>
        <taxon>Primates</taxon>
        <taxon>Haplorrhini</taxon>
        <taxon>Catarrhini</taxon>
        <taxon>Hominidae</taxon>
        <taxon>Homo</taxon>
    </lineage>
</organism>
<accession>Q5SQQ9</accession>
<accession>B1AVW5</accession>
<accession>Q6ZSX0</accession>
<protein>
    <recommendedName>
        <fullName>Ventral anterior homeobox 1</fullName>
    </recommendedName>
</protein>
<gene>
    <name type="primary">VAX1</name>
</gene>
<name>VAX1_HUMAN</name>
<comment type="function">
    <text evidence="1">Transcription factor that may function in dorsoventral specification of the forebrain. Required for axon guidance and major tract formation in the developing forebrain. May contribute to the differentiation of the neuroretina, pigmented epithelium and optic stalk (By similarity).</text>
</comment>
<comment type="interaction">
    <interactant intactId="EBI-12227803">
        <id>Q5SQQ9-2</id>
    </interactant>
    <interactant intactId="EBI-739789">
        <id>Q92997</id>
        <label>DVL3</label>
    </interactant>
    <organismsDiffer>false</organismsDiffer>
    <experiments>3</experiments>
</comment>
<comment type="interaction">
    <interactant intactId="EBI-12227803">
        <id>Q5SQQ9-2</id>
    </interactant>
    <interactant intactId="EBI-769261">
        <id>Q96JC9</id>
        <label>EAF1</label>
    </interactant>
    <organismsDiffer>false</organismsDiffer>
    <experiments>3</experiments>
</comment>
<comment type="interaction">
    <interactant intactId="EBI-12227803">
        <id>Q5SQQ9-2</id>
    </interactant>
    <interactant intactId="EBI-12001340">
        <id>P62508-3</id>
        <label>ESRRG</label>
    </interactant>
    <organismsDiffer>false</organismsDiffer>
    <experiments>3</experiments>
</comment>
<comment type="interaction">
    <interactant intactId="EBI-12227803">
        <id>Q5SQQ9-2</id>
    </interactant>
    <interactant intactId="EBI-949582">
        <id>Q76N89</id>
        <label>HECW1</label>
    </interactant>
    <organismsDiffer>false</organismsDiffer>
    <experiments>3</experiments>
</comment>
<comment type="interaction">
    <interactant intactId="EBI-12227803">
        <id>Q5SQQ9-2</id>
    </interactant>
    <interactant intactId="EBI-2549423">
        <id>Q6NT76</id>
        <label>HMBOX1</label>
    </interactant>
    <organismsDiffer>false</organismsDiffer>
    <experiments>3</experiments>
</comment>
<comment type="interaction">
    <interactant intactId="EBI-12227803">
        <id>Q5SQQ9-2</id>
    </interactant>
    <interactant intactId="EBI-716132">
        <id>P42568</id>
        <label>MLLT3</label>
    </interactant>
    <organismsDiffer>false</organismsDiffer>
    <experiments>3</experiments>
</comment>
<comment type="interaction">
    <interactant intactId="EBI-12227803">
        <id>Q5SQQ9-2</id>
    </interactant>
    <interactant intactId="EBI-79165">
        <id>Q9NRD5</id>
        <label>PICK1</label>
    </interactant>
    <organismsDiffer>false</organismsDiffer>
    <experiments>3</experiments>
</comment>
<comment type="interaction">
    <interactant intactId="EBI-12227803">
        <id>Q5SQQ9-2</id>
    </interactant>
    <interactant intactId="EBI-5452779">
        <id>Q9BUI4</id>
        <label>POLR3C</label>
    </interactant>
    <organismsDiffer>false</organismsDiffer>
    <experiments>3</experiments>
</comment>
<comment type="interaction">
    <interactant intactId="EBI-12227803">
        <id>Q5SQQ9-2</id>
    </interactant>
    <interactant intactId="EBI-372273">
        <id>P20618</id>
        <label>PSMB1</label>
    </interactant>
    <organismsDiffer>false</organismsDiffer>
    <experiments>3</experiments>
</comment>
<comment type="interaction">
    <interactant intactId="EBI-12227803">
        <id>Q5SQQ9-2</id>
    </interactant>
    <interactant intactId="EBI-1504830">
        <id>Q9P2K3-2</id>
        <label>RCOR3</label>
    </interactant>
    <organismsDiffer>false</organismsDiffer>
    <experiments>3</experiments>
</comment>
<comment type="interaction">
    <interactant intactId="EBI-12227803">
        <id>Q5SQQ9-2</id>
    </interactant>
    <interactant intactId="EBI-747925">
        <id>Q9NQG5</id>
        <label>RPRD1B</label>
    </interactant>
    <organismsDiffer>false</organismsDiffer>
    <experiments>3</experiments>
</comment>
<comment type="interaction">
    <interactant intactId="EBI-12227803">
        <id>Q5SQQ9-2</id>
    </interactant>
    <interactant intactId="EBI-742426">
        <id>Q9H190</id>
        <label>SDCBP2</label>
    </interactant>
    <organismsDiffer>false</organismsDiffer>
    <experiments>3</experiments>
</comment>
<comment type="interaction">
    <interactant intactId="EBI-12227803">
        <id>Q5SQQ9-2</id>
    </interactant>
    <interactant intactId="EBI-12023934">
        <id>Q5MJ10</id>
        <label>SPANXN2</label>
    </interactant>
    <organismsDiffer>false</organismsDiffer>
    <experiments>3</experiments>
</comment>
<comment type="interaction">
    <interactant intactId="EBI-12227803">
        <id>Q5SQQ9-2</id>
    </interactant>
    <interactant intactId="EBI-2511991">
        <id>Q9Y2K6</id>
        <label>USP20</label>
    </interactant>
    <organismsDiffer>false</organismsDiffer>
    <experiments>3</experiments>
</comment>
<comment type="subcellular location">
    <subcellularLocation>
        <location evidence="2">Nucleus</location>
    </subcellularLocation>
</comment>
<comment type="alternative products">
    <event type="alternative splicing"/>
    <isoform>
        <id>Q5SQQ9-1</id>
        <name>1</name>
        <sequence type="displayed"/>
    </isoform>
    <isoform>
        <id>Q5SQQ9-2</id>
        <name>2</name>
        <sequence type="described" ref="VSP_019396"/>
    </isoform>
</comment>
<comment type="disease" evidence="4">
    <disease id="DI-03496">
        <name>Microphthalmia, syndromic, 11</name>
        <acronym>MCOPS11</acronym>
        <description>A rare clinical entity including as main characteristics microphthalmia and small optic nerves, cleft lip and palate, absence of corpus callosum, hippocampal malformations, and absence of the pineal gland. Microphthalmia is a disorder of eye formation, ranging from small size of a single eye to complete bilateral absence of ocular tissues (anophthalmia). In many cases, microphthalmia/anophthalmia occurs in association with syndromes that include non-ocular abnormalities.</description>
        <dbReference type="MIM" id="614402"/>
    </disease>
    <text>The disease is caused by variants affecting the gene represented in this entry.</text>
</comment>
<comment type="similarity">
    <text evidence="7">Belongs to the EMX homeobox family.</text>
</comment>
<evidence type="ECO:0000250" key="1"/>
<evidence type="ECO:0000255" key="2">
    <source>
        <dbReference type="PROSITE-ProRule" id="PRU00108"/>
    </source>
</evidence>
<evidence type="ECO:0000256" key="3">
    <source>
        <dbReference type="SAM" id="MobiDB-lite"/>
    </source>
</evidence>
<evidence type="ECO:0000269" key="4">
    <source>
    </source>
</evidence>
<evidence type="ECO:0000303" key="5">
    <source>
    </source>
</evidence>
<evidence type="ECO:0000303" key="6">
    <source>
    </source>
</evidence>
<evidence type="ECO:0000305" key="7"/>
<sequence>MFGKPDKMDVRCHSDAEAARVSKNAHKESRESKGAEGNLPAAFLKEPQGAFSASGAAEDCNKSKSNSAADPDYCRRILVRDAKGSIREIILPKGLDLDRPKRTRTSFTAEQLYRLEMEFQRCQYVVGRERTELARQLNLSETQVKVWFQNRRTKQKKDQGKDSELRSVVSETAATCSVLRLLEQGRLLSPPGLPALLPPCATGALGSALRGPSLPALGAGAAAGSAAAAAAAAPGPAGAASPHPPAVGGAPGPGPAGPGGLHAGAPAAGHSLFSLPVPSLLGSVASRLSSAPLTMAGSLAGNLQELSARYLSSSAFEPYSRTNNKEGAEKKALD</sequence>